<organism>
    <name type="scientific">Caenorhabditis briggsae</name>
    <dbReference type="NCBI Taxonomy" id="6238"/>
    <lineage>
        <taxon>Eukaryota</taxon>
        <taxon>Metazoa</taxon>
        <taxon>Ecdysozoa</taxon>
        <taxon>Nematoda</taxon>
        <taxon>Chromadorea</taxon>
        <taxon>Rhabditida</taxon>
        <taxon>Rhabditina</taxon>
        <taxon>Rhabditomorpha</taxon>
        <taxon>Rhabditoidea</taxon>
        <taxon>Rhabditidae</taxon>
        <taxon>Peloderinae</taxon>
        <taxon>Caenorhabditis</taxon>
    </lineage>
</organism>
<feature type="chain" id="PRO_0000218942" description="Signal peptidase complex subunit 3">
    <location>
        <begin position="1"/>
        <end position="180"/>
    </location>
</feature>
<feature type="topological domain" description="Cytoplasmic" evidence="1">
    <location>
        <begin position="1"/>
        <end position="12"/>
    </location>
</feature>
<feature type="transmembrane region" description="Helical; Signal-anchor for type II membrane protein" evidence="4">
    <location>
        <begin position="13"/>
        <end position="33"/>
    </location>
</feature>
<feature type="topological domain" description="Lumenal" evidence="1">
    <location>
        <begin position="34"/>
        <end position="180"/>
    </location>
</feature>
<feature type="glycosylation site" description="N-linked (GlcNAc...) asparagine" evidence="4">
    <location>
        <position position="141"/>
    </location>
</feature>
<name>SPCS3_CAEBR</name>
<dbReference type="EMBL" id="HE600964">
    <property type="protein sequence ID" value="CAP39457.1"/>
    <property type="molecule type" value="Genomic_DNA"/>
</dbReference>
<dbReference type="RefSeq" id="XP_002643062.1">
    <property type="nucleotide sequence ID" value="XM_002643016.1"/>
</dbReference>
<dbReference type="SMR" id="Q60MW2"/>
<dbReference type="FunCoup" id="Q60MW2">
    <property type="interactions" value="1462"/>
</dbReference>
<dbReference type="STRING" id="6238.Q60MW2"/>
<dbReference type="GlyCosmos" id="Q60MW2">
    <property type="glycosylation" value="1 site, No reported glycans"/>
</dbReference>
<dbReference type="EnsemblMetazoa" id="CBG22979.1">
    <property type="protein sequence ID" value="CBG22979.1"/>
    <property type="gene ID" value="WBGene00041418"/>
</dbReference>
<dbReference type="GeneID" id="8585056"/>
<dbReference type="KEGG" id="cbr:CBG_22979"/>
<dbReference type="CTD" id="8585056"/>
<dbReference type="WormBase" id="CBG22979">
    <property type="protein sequence ID" value="CBP05465"/>
    <property type="gene ID" value="WBGene00041418"/>
    <property type="gene designation" value="Cbr-spcs-3"/>
</dbReference>
<dbReference type="eggNOG" id="KOG3372">
    <property type="taxonomic scope" value="Eukaryota"/>
</dbReference>
<dbReference type="HOGENOM" id="CLU_068714_1_0_1"/>
<dbReference type="InParanoid" id="Q60MW2"/>
<dbReference type="OMA" id="FWDDGHG"/>
<dbReference type="Proteomes" id="UP000008549">
    <property type="component" value="Unassembled WGS sequence"/>
</dbReference>
<dbReference type="GO" id="GO:0005787">
    <property type="term" value="C:signal peptidase complex"/>
    <property type="evidence" value="ECO:0000318"/>
    <property type="project" value="GO_Central"/>
</dbReference>
<dbReference type="GO" id="GO:0045047">
    <property type="term" value="P:protein targeting to ER"/>
    <property type="evidence" value="ECO:0000318"/>
    <property type="project" value="GO_Central"/>
</dbReference>
<dbReference type="GO" id="GO:0006465">
    <property type="term" value="P:signal peptide processing"/>
    <property type="evidence" value="ECO:0000318"/>
    <property type="project" value="GO_Central"/>
</dbReference>
<dbReference type="InterPro" id="IPR007653">
    <property type="entry name" value="SPC3"/>
</dbReference>
<dbReference type="PANTHER" id="PTHR12804">
    <property type="entry name" value="MICROSOMAL SIGNAL PEPTIDASE 23 KD SUBUNIT SPC22/23"/>
    <property type="match status" value="1"/>
</dbReference>
<dbReference type="PANTHER" id="PTHR12804:SF0">
    <property type="entry name" value="SIGNAL PEPTIDASE COMPLEX SUBUNIT 3"/>
    <property type="match status" value="1"/>
</dbReference>
<dbReference type="Pfam" id="PF04573">
    <property type="entry name" value="SPC22"/>
    <property type="match status" value="1"/>
</dbReference>
<dbReference type="PIRSF" id="PIRSF016089">
    <property type="entry name" value="SPC22"/>
    <property type="match status" value="1"/>
</dbReference>
<comment type="function">
    <text evidence="2 3">Essential component of the signal peptidase complex (SPC) which catalyzes the cleavage of N-terminal signal sequences from nascent proteins as they are translocated into the lumen of the endoplasmic reticulum (By similarity). Essential for the SPC catalytic activity, possibly by stabilizing and positioning the active center of the complex close to the lumenal surface (By similarity).</text>
</comment>
<comment type="subunit">
    <text evidence="2">Component of the signal peptidase complex (SPC) composed of a catalytic subunit sec-11 and three accessory subunits spcs-1, spcs-2 and spcs-3. The complex induces a local thinning of the ER membrane which is used to measure the length of the signal peptide (SP) h-region of protein substrates. This ensures the selectivity of the complex towards h-regions shorter than 18-20 amino acids.</text>
</comment>
<comment type="subcellular location">
    <subcellularLocation>
        <location evidence="1">Endoplasmic reticulum membrane</location>
        <topology evidence="1">Single-pass type II membrane protein</topology>
    </subcellularLocation>
</comment>
<comment type="similarity">
    <text evidence="5">Belongs to the SPCS3 family.</text>
</comment>
<protein>
    <recommendedName>
        <fullName>Signal peptidase complex subunit 3</fullName>
    </recommendedName>
    <alternativeName>
        <fullName>Microsomal signal peptidase 22 kDa subunit</fullName>
        <shortName>SPC22</shortName>
        <shortName>SPase 22 kDa subunit</shortName>
    </alternativeName>
</protein>
<accession>Q60MW2</accession>
<accession>A8Y3I8</accession>
<gene>
    <name evidence="6" type="primary">spcs-3</name>
    <name evidence="6" type="ORF">CBG22979</name>
</gene>
<keyword id="KW-0256">Endoplasmic reticulum</keyword>
<keyword id="KW-0325">Glycoprotein</keyword>
<keyword id="KW-0472">Membrane</keyword>
<keyword id="KW-1185">Reference proteome</keyword>
<keyword id="KW-0735">Signal-anchor</keyword>
<keyword id="KW-0812">Transmembrane</keyword>
<keyword id="KW-1133">Transmembrane helix</keyword>
<reference key="1">
    <citation type="journal article" date="2003" name="PLoS Biol.">
        <title>The genome sequence of Caenorhabditis briggsae: a platform for comparative genomics.</title>
        <authorList>
            <person name="Stein L.D."/>
            <person name="Bao Z."/>
            <person name="Blasiar D."/>
            <person name="Blumenthal T."/>
            <person name="Brent M.R."/>
            <person name="Chen N."/>
            <person name="Chinwalla A."/>
            <person name="Clarke L."/>
            <person name="Clee C."/>
            <person name="Coghlan A."/>
            <person name="Coulson A."/>
            <person name="D'Eustachio P."/>
            <person name="Fitch D.H.A."/>
            <person name="Fulton L.A."/>
            <person name="Fulton R.E."/>
            <person name="Griffiths-Jones S."/>
            <person name="Harris T.W."/>
            <person name="Hillier L.W."/>
            <person name="Kamath R."/>
            <person name="Kuwabara P.E."/>
            <person name="Mardis E.R."/>
            <person name="Marra M.A."/>
            <person name="Miner T.L."/>
            <person name="Minx P."/>
            <person name="Mullikin J.C."/>
            <person name="Plumb R.W."/>
            <person name="Rogers J."/>
            <person name="Schein J.E."/>
            <person name="Sohrmann M."/>
            <person name="Spieth J."/>
            <person name="Stajich J.E."/>
            <person name="Wei C."/>
            <person name="Willey D."/>
            <person name="Wilson R.K."/>
            <person name="Durbin R.M."/>
            <person name="Waterston R.H."/>
        </authorList>
    </citation>
    <scope>NUCLEOTIDE SEQUENCE [LARGE SCALE GENOMIC DNA]</scope>
    <source>
        <strain>AF16</strain>
    </source>
</reference>
<sequence length="180" mass="20747">MHNLLSRANSLLAFTLWVMAAVTAACFLSTVFLDYTVSNHLEVNDIKIRNVRDYATDDKQADLATLAFNLKVDFSRLFNWNVKQLFVYLVAEYKSAENAVNQVVIWDRIVERAERVVMDEIGVKTKYYFLDDGAHLLKHDNVTFVLRYNVIPNAGYLRLVQSTNQLVVPFPTTYTTTRRS</sequence>
<proteinExistence type="inferred from homology"/>
<evidence type="ECO:0000250" key="1">
    <source>
        <dbReference type="UniProtKB" id="P61008"/>
    </source>
</evidence>
<evidence type="ECO:0000250" key="2">
    <source>
        <dbReference type="UniProtKB" id="P61009"/>
    </source>
</evidence>
<evidence type="ECO:0000250" key="3">
    <source>
        <dbReference type="UniProtKB" id="Q12133"/>
    </source>
</evidence>
<evidence type="ECO:0000255" key="4"/>
<evidence type="ECO:0000305" key="5"/>
<evidence type="ECO:0000312" key="6">
    <source>
        <dbReference type="WormBase" id="CBG22979"/>
    </source>
</evidence>